<gene>
    <name evidence="5" type="primary">doeC</name>
    <name type="ordered locus">HELO_3662</name>
</gene>
<protein>
    <recommendedName>
        <fullName>Aspartate-semialdehyde dehydrogenase (Non-phosphorylating)</fullName>
        <ecNumber evidence="7">1.2.1.-</ecNumber>
    </recommendedName>
</protein>
<comment type="function">
    <text evidence="4">Involved in the degradation of ectoine, which allows H.elongata to utilize ectoine as both a carbon and a nitrogen source for growth. Probably catalyzes the NAD(+)-dependent oxidation of L-aspartate-semialdehyde to L-aspartate.</text>
</comment>
<comment type="catalytic activity">
    <reaction evidence="7">
        <text>L-aspartate 4-semialdehyde + NAD(+) + H2O = L-aspartate + NADH + 2 H(+)</text>
        <dbReference type="Rhea" id="RHEA:45764"/>
        <dbReference type="ChEBI" id="CHEBI:15377"/>
        <dbReference type="ChEBI" id="CHEBI:15378"/>
        <dbReference type="ChEBI" id="CHEBI:29991"/>
        <dbReference type="ChEBI" id="CHEBI:57540"/>
        <dbReference type="ChEBI" id="CHEBI:57945"/>
        <dbReference type="ChEBI" id="CHEBI:537519"/>
    </reaction>
    <physiologicalReaction direction="left-to-right" evidence="7">
        <dbReference type="Rhea" id="RHEA:45765"/>
    </physiologicalReaction>
</comment>
<comment type="subcellular location">
    <subcellularLocation>
        <location evidence="1">Cytoplasm</location>
    </subcellularLocation>
</comment>
<comment type="disruption phenotype">
    <text evidence="4">Cells lacking this gene are unable to grow on ectoine as sole carbon source.</text>
</comment>
<comment type="similarity">
    <text evidence="6">Belongs to the aldehyde dehydrogenase family.</text>
</comment>
<evidence type="ECO:0000250" key="1"/>
<evidence type="ECO:0000255" key="2">
    <source>
        <dbReference type="PROSITE-ProRule" id="PRU10007"/>
    </source>
</evidence>
<evidence type="ECO:0000255" key="3">
    <source>
        <dbReference type="PROSITE-ProRule" id="PRU10008"/>
    </source>
</evidence>
<evidence type="ECO:0000269" key="4">
    <source>
    </source>
</evidence>
<evidence type="ECO:0000303" key="5">
    <source>
    </source>
</evidence>
<evidence type="ECO:0000305" key="6"/>
<evidence type="ECO:0000305" key="7">
    <source>
    </source>
</evidence>
<dbReference type="EC" id="1.2.1.-" evidence="7"/>
<dbReference type="EMBL" id="FN869568">
    <property type="protein sequence ID" value="CBV43546.1"/>
    <property type="molecule type" value="Genomic_DNA"/>
</dbReference>
<dbReference type="RefSeq" id="WP_013333418.1">
    <property type="nucleotide sequence ID" value="NC_014532.2"/>
</dbReference>
<dbReference type="SMR" id="E1V7V8"/>
<dbReference type="STRING" id="768066.HELO_3662"/>
<dbReference type="GeneID" id="91011060"/>
<dbReference type="KEGG" id="hel:HELO_3662"/>
<dbReference type="eggNOG" id="COG1012">
    <property type="taxonomic scope" value="Bacteria"/>
</dbReference>
<dbReference type="HOGENOM" id="CLU_005391_1_0_6"/>
<dbReference type="OrthoDB" id="9812625at2"/>
<dbReference type="BioCyc" id="MetaCyc:MONOMER-20121"/>
<dbReference type="Proteomes" id="UP000008707">
    <property type="component" value="Chromosome"/>
</dbReference>
<dbReference type="GO" id="GO:0005737">
    <property type="term" value="C:cytoplasm"/>
    <property type="evidence" value="ECO:0007669"/>
    <property type="project" value="UniProtKB-SubCell"/>
</dbReference>
<dbReference type="GO" id="GO:0016620">
    <property type="term" value="F:oxidoreductase activity, acting on the aldehyde or oxo group of donors, NAD or NADP as acceptor"/>
    <property type="evidence" value="ECO:0000314"/>
    <property type="project" value="UniProtKB"/>
</dbReference>
<dbReference type="GO" id="GO:0004777">
    <property type="term" value="F:succinate-semialdehyde dehydrogenase (NAD+) activity"/>
    <property type="evidence" value="ECO:0007669"/>
    <property type="project" value="TreeGrafter"/>
</dbReference>
<dbReference type="GO" id="GO:0042400">
    <property type="term" value="P:ectoine catabolic process"/>
    <property type="evidence" value="ECO:0000315"/>
    <property type="project" value="UniProtKB"/>
</dbReference>
<dbReference type="GO" id="GO:0009450">
    <property type="term" value="P:gamma-aminobutyric acid catabolic process"/>
    <property type="evidence" value="ECO:0007669"/>
    <property type="project" value="TreeGrafter"/>
</dbReference>
<dbReference type="CDD" id="cd07103">
    <property type="entry name" value="ALDH_F5_SSADH_GabD"/>
    <property type="match status" value="1"/>
</dbReference>
<dbReference type="FunFam" id="3.40.605.10:FF:000026">
    <property type="entry name" value="Aldehyde dehydrogenase, putative"/>
    <property type="match status" value="1"/>
</dbReference>
<dbReference type="FunFam" id="3.40.309.10:FF:000047">
    <property type="entry name" value="NAD-dependent succinate-semialdehyde dehydrogenase"/>
    <property type="match status" value="1"/>
</dbReference>
<dbReference type="FunFam" id="3.40.605.10:FF:000005">
    <property type="entry name" value="Succinate-semialdehyde dehydrogenase I"/>
    <property type="match status" value="1"/>
</dbReference>
<dbReference type="Gene3D" id="3.40.605.10">
    <property type="entry name" value="Aldehyde Dehydrogenase, Chain A, domain 1"/>
    <property type="match status" value="1"/>
</dbReference>
<dbReference type="Gene3D" id="3.40.309.10">
    <property type="entry name" value="Aldehyde Dehydrogenase, Chain A, domain 2"/>
    <property type="match status" value="1"/>
</dbReference>
<dbReference type="InterPro" id="IPR016161">
    <property type="entry name" value="Ald_DH/histidinol_DH"/>
</dbReference>
<dbReference type="InterPro" id="IPR016163">
    <property type="entry name" value="Ald_DH_C"/>
</dbReference>
<dbReference type="InterPro" id="IPR016160">
    <property type="entry name" value="Ald_DH_CS_CYS"/>
</dbReference>
<dbReference type="InterPro" id="IPR029510">
    <property type="entry name" value="Ald_DH_CS_GLU"/>
</dbReference>
<dbReference type="InterPro" id="IPR016162">
    <property type="entry name" value="Ald_DH_N"/>
</dbReference>
<dbReference type="InterPro" id="IPR015590">
    <property type="entry name" value="Aldehyde_DH_dom"/>
</dbReference>
<dbReference type="InterPro" id="IPR050740">
    <property type="entry name" value="Aldehyde_DH_Superfamily"/>
</dbReference>
<dbReference type="PANTHER" id="PTHR43353">
    <property type="entry name" value="SUCCINATE-SEMIALDEHYDE DEHYDROGENASE, MITOCHONDRIAL"/>
    <property type="match status" value="1"/>
</dbReference>
<dbReference type="PANTHER" id="PTHR43353:SF5">
    <property type="entry name" value="SUCCINATE-SEMIALDEHYDE DEHYDROGENASE, MITOCHONDRIAL"/>
    <property type="match status" value="1"/>
</dbReference>
<dbReference type="Pfam" id="PF00171">
    <property type="entry name" value="Aldedh"/>
    <property type="match status" value="1"/>
</dbReference>
<dbReference type="SUPFAM" id="SSF53720">
    <property type="entry name" value="ALDH-like"/>
    <property type="match status" value="1"/>
</dbReference>
<dbReference type="PROSITE" id="PS00070">
    <property type="entry name" value="ALDEHYDE_DEHYDR_CYS"/>
    <property type="match status" value="1"/>
</dbReference>
<dbReference type="PROSITE" id="PS00687">
    <property type="entry name" value="ALDEHYDE_DEHYDR_GLU"/>
    <property type="match status" value="1"/>
</dbReference>
<feature type="chain" id="PRO_0000428760" description="Aspartate-semialdehyde dehydrogenase (Non-phosphorylating)">
    <location>
        <begin position="1"/>
        <end position="493"/>
    </location>
</feature>
<feature type="active site" description="Proton acceptor" evidence="2 3">
    <location>
        <position position="259"/>
    </location>
</feature>
<feature type="active site" description="Nucleophile" evidence="2 3">
    <location>
        <position position="293"/>
    </location>
</feature>
<feature type="binding site" evidence="1">
    <location>
        <begin position="160"/>
        <end position="161"/>
    </location>
    <ligand>
        <name>NADP(+)</name>
        <dbReference type="ChEBI" id="CHEBI:58349"/>
    </ligand>
</feature>
<feature type="binding site" evidence="1">
    <location>
        <begin position="184"/>
        <end position="187"/>
    </location>
    <ligand>
        <name>NADP(+)</name>
        <dbReference type="ChEBI" id="CHEBI:58349"/>
    </ligand>
</feature>
<feature type="binding site" evidence="1">
    <location>
        <begin position="237"/>
        <end position="238"/>
    </location>
    <ligand>
        <name>NADP(+)</name>
        <dbReference type="ChEBI" id="CHEBI:58349"/>
    </ligand>
</feature>
<feature type="binding site" evidence="1">
    <location>
        <position position="260"/>
    </location>
    <ligand>
        <name>NADP(+)</name>
        <dbReference type="ChEBI" id="CHEBI:58349"/>
    </ligand>
</feature>
<feature type="binding site" evidence="1">
    <location>
        <position position="390"/>
    </location>
    <ligand>
        <name>NADP(+)</name>
        <dbReference type="ChEBI" id="CHEBI:58349"/>
    </ligand>
</feature>
<accession>E1V7V8</accession>
<name>DOEC_HALED</name>
<organism>
    <name type="scientific">Halomonas elongata (strain ATCC 33173 / DSM 2581 / NBRC 15536 / NCIMB 2198 / 1H9)</name>
    <dbReference type="NCBI Taxonomy" id="768066"/>
    <lineage>
        <taxon>Bacteria</taxon>
        <taxon>Pseudomonadati</taxon>
        <taxon>Pseudomonadota</taxon>
        <taxon>Gammaproteobacteria</taxon>
        <taxon>Oceanospirillales</taxon>
        <taxon>Halomonadaceae</taxon>
        <taxon>Halomonas</taxon>
    </lineage>
</organism>
<proteinExistence type="inferred from homology"/>
<reference key="1">
    <citation type="journal article" date="2011" name="Environ. Microbiol.">
        <title>A blueprint of ectoine metabolism from the genome of the industrial producer Halomonas elongata DSM 2581(T).</title>
        <authorList>
            <person name="Schwibbert K."/>
            <person name="Marin-Sanguino A."/>
            <person name="Bagyan I."/>
            <person name="Heidrich G."/>
            <person name="Lentzen G."/>
            <person name="Seitz H."/>
            <person name="Rampp M."/>
            <person name="Schuster S.C."/>
            <person name="Klenk H.P."/>
            <person name="Pfeiffer F."/>
            <person name="Oesterhelt D."/>
            <person name="Kunte H.J."/>
        </authorList>
    </citation>
    <scope>NUCLEOTIDE SEQUENCE [LARGE SCALE GENOMIC DNA]</scope>
    <scope>FUNCTION</scope>
    <scope>DISRUPTION PHENOTYPE</scope>
    <source>
        <strain>ATCC 33173 / DSM 2581 / NBRC 15536 / NCIMB 2198 / 1H9</strain>
    </source>
</reference>
<sequence>MTLSNQLSDLRLFRQYAYIDGKWTHGDAGREEAVFDPATGEAIGHIPVLEVEQIRGAVDAAEAAFVQWRALRADERCERLLAWYDLLQANREDLATIMTLEQGKPLPDARGEVEYGASFVRWFAEEGKRTFGDTIPSHIPNAALGTIKEPVGIAALITPWNFPLAMITRKAAAAMAAGCPVIVKPAHETPYSALALAELAERAGIPAGVFNVVLGEAAEVSKLLCDDERIKALSFTGSTRVGRLLLEQSANTVKRVSLELGGNAPFIVGPDMDPREAAFAAVAAKFQTAGQDCLAANRILVHESIHDAFVEQFAERMAALTVGNGLESEVDLGPLIHGQAVEKASAIVDDALSRGATLVAGDQREAPGPNFFMPTLLTGVTPEMQVWREENFAPVAGITSYRDDDEVIEMANDTEYGLAAYVYTHDIRRIWKLLRALEYGMVSVNSVKMTGPPVPFGGVKQSGLGREGGVTGIDEYLETKYYCLGALGSVSGS</sequence>
<keyword id="KW-0963">Cytoplasm</keyword>
<keyword id="KW-0520">NAD</keyword>
<keyword id="KW-0521">NADP</keyword>
<keyword id="KW-0560">Oxidoreductase</keyword>